<comment type="function">
    <text evidence="1">Joins adenosylcobinamide-GDP and alpha-ribazole to generate adenosylcobalamin (Ado-cobalamin). Also synthesizes adenosylcobalamin 5'-phosphate from adenosylcobinamide-GDP and alpha-ribazole 5'-phosphate.</text>
</comment>
<comment type="catalytic activity">
    <reaction evidence="1">
        <text>alpha-ribazole + adenosylcob(III)inamide-GDP = adenosylcob(III)alamin + GMP + H(+)</text>
        <dbReference type="Rhea" id="RHEA:16049"/>
        <dbReference type="ChEBI" id="CHEBI:10329"/>
        <dbReference type="ChEBI" id="CHEBI:15378"/>
        <dbReference type="ChEBI" id="CHEBI:18408"/>
        <dbReference type="ChEBI" id="CHEBI:58115"/>
        <dbReference type="ChEBI" id="CHEBI:60487"/>
        <dbReference type="EC" id="2.7.8.26"/>
    </reaction>
</comment>
<comment type="catalytic activity">
    <reaction evidence="1">
        <text>alpha-ribazole 5'-phosphate + adenosylcob(III)inamide-GDP = adenosylcob(III)alamin 5'-phosphate + GMP + H(+)</text>
        <dbReference type="Rhea" id="RHEA:23560"/>
        <dbReference type="ChEBI" id="CHEBI:15378"/>
        <dbReference type="ChEBI" id="CHEBI:57918"/>
        <dbReference type="ChEBI" id="CHEBI:58115"/>
        <dbReference type="ChEBI" id="CHEBI:60487"/>
        <dbReference type="ChEBI" id="CHEBI:60493"/>
        <dbReference type="EC" id="2.7.8.26"/>
    </reaction>
</comment>
<comment type="cofactor">
    <cofactor evidence="1">
        <name>Mg(2+)</name>
        <dbReference type="ChEBI" id="CHEBI:18420"/>
    </cofactor>
</comment>
<comment type="pathway">
    <text evidence="1">Cofactor biosynthesis; adenosylcobalamin biosynthesis; adenosylcobalamin from cob(II)yrinate a,c-diamide: step 7/7.</text>
</comment>
<comment type="subcellular location">
    <subcellularLocation>
        <location evidence="1">Cell inner membrane</location>
        <topology evidence="1">Multi-pass membrane protein</topology>
    </subcellularLocation>
</comment>
<comment type="similarity">
    <text evidence="1">Belongs to the CobS family.</text>
</comment>
<reference key="1">
    <citation type="journal article" date="2002" name="DNA Res.">
        <title>Complete genome structure of the thermophilic cyanobacterium Thermosynechococcus elongatus BP-1.</title>
        <authorList>
            <person name="Nakamura Y."/>
            <person name="Kaneko T."/>
            <person name="Sato S."/>
            <person name="Ikeuchi M."/>
            <person name="Katoh H."/>
            <person name="Sasamoto S."/>
            <person name="Watanabe A."/>
            <person name="Iriguchi M."/>
            <person name="Kawashima K."/>
            <person name="Kimura T."/>
            <person name="Kishida Y."/>
            <person name="Kiyokawa C."/>
            <person name="Kohara M."/>
            <person name="Matsumoto M."/>
            <person name="Matsuno A."/>
            <person name="Nakazaki N."/>
            <person name="Shimpo S."/>
            <person name="Sugimoto M."/>
            <person name="Takeuchi C."/>
            <person name="Yamada M."/>
            <person name="Tabata S."/>
        </authorList>
    </citation>
    <scope>NUCLEOTIDE SEQUENCE [LARGE SCALE GENOMIC DNA]</scope>
    <source>
        <strain>NIES-2133 / IAM M-273 / BP-1</strain>
    </source>
</reference>
<proteinExistence type="inferred from homology"/>
<protein>
    <recommendedName>
        <fullName evidence="1">Adenosylcobinamide-GDP ribazoletransferase</fullName>
        <ecNumber evidence="1">2.7.8.26</ecNumber>
    </recommendedName>
    <alternativeName>
        <fullName evidence="1">Cobalamin synthase</fullName>
    </alternativeName>
    <alternativeName>
        <fullName evidence="1">Cobalamin-5'-phosphate synthase</fullName>
    </alternativeName>
</protein>
<name>COBS_THEVB</name>
<evidence type="ECO:0000255" key="1">
    <source>
        <dbReference type="HAMAP-Rule" id="MF_00719"/>
    </source>
</evidence>
<sequence>MKSLWQEWLGAIAFYTCLPISPRWPIQLAGAAKWCPWVGLVLGGMLWGVQWLLDFLQVPSPVASAVLVALWLALTGGLHLDGAMDTADGLAVRDQQRRLEVMADSRAGAFGVMAAMVILLLKVTSLSSLEKGSVLVWVLVLGRLAQVWAIARYPYLKPQGTGQIHKTSGVFPRDFWPSGLLVLLLSFLLPLPLGQLLFGLLLILLIPAWFQSQLGGHTGDSYGAVVEWTEALLLVAFTVGSAS</sequence>
<accession>Q8DJ91</accession>
<feature type="chain" id="PRO_0000146898" description="Adenosylcobinamide-GDP ribazoletransferase">
    <location>
        <begin position="1"/>
        <end position="243"/>
    </location>
</feature>
<feature type="transmembrane region" description="Helical" evidence="1">
    <location>
        <begin position="8"/>
        <end position="28"/>
    </location>
</feature>
<feature type="transmembrane region" description="Helical" evidence="1">
    <location>
        <begin position="36"/>
        <end position="56"/>
    </location>
</feature>
<feature type="transmembrane region" description="Helical" evidence="1">
    <location>
        <begin position="58"/>
        <end position="78"/>
    </location>
</feature>
<feature type="transmembrane region" description="Helical" evidence="1">
    <location>
        <begin position="107"/>
        <end position="127"/>
    </location>
</feature>
<feature type="transmembrane region" description="Helical" evidence="1">
    <location>
        <begin position="131"/>
        <end position="151"/>
    </location>
</feature>
<feature type="transmembrane region" description="Helical" evidence="1">
    <location>
        <begin position="187"/>
        <end position="207"/>
    </location>
</feature>
<feature type="transmembrane region" description="Helical" evidence="1">
    <location>
        <begin position="222"/>
        <end position="242"/>
    </location>
</feature>
<dbReference type="EC" id="2.7.8.26" evidence="1"/>
<dbReference type="EMBL" id="BA000039">
    <property type="protein sequence ID" value="BAC08889.1"/>
    <property type="molecule type" value="Genomic_DNA"/>
</dbReference>
<dbReference type="RefSeq" id="NP_682127.1">
    <property type="nucleotide sequence ID" value="NC_004113.1"/>
</dbReference>
<dbReference type="RefSeq" id="WP_011057177.1">
    <property type="nucleotide sequence ID" value="NC_004113.1"/>
</dbReference>
<dbReference type="STRING" id="197221.gene:10747935"/>
<dbReference type="EnsemblBacteria" id="BAC08889">
    <property type="protein sequence ID" value="BAC08889"/>
    <property type="gene ID" value="BAC08889"/>
</dbReference>
<dbReference type="KEGG" id="tel:tll1337"/>
<dbReference type="PATRIC" id="fig|197221.4.peg.1405"/>
<dbReference type="eggNOG" id="COG0368">
    <property type="taxonomic scope" value="Bacteria"/>
</dbReference>
<dbReference type="UniPathway" id="UPA00148">
    <property type="reaction ID" value="UER00238"/>
</dbReference>
<dbReference type="Proteomes" id="UP000000440">
    <property type="component" value="Chromosome"/>
</dbReference>
<dbReference type="GO" id="GO:0005886">
    <property type="term" value="C:plasma membrane"/>
    <property type="evidence" value="ECO:0007669"/>
    <property type="project" value="UniProtKB-SubCell"/>
</dbReference>
<dbReference type="GO" id="GO:0051073">
    <property type="term" value="F:adenosylcobinamide-GDP ribazoletransferase activity"/>
    <property type="evidence" value="ECO:0007669"/>
    <property type="project" value="UniProtKB-UniRule"/>
</dbReference>
<dbReference type="GO" id="GO:0008818">
    <property type="term" value="F:cobalamin 5'-phosphate synthase activity"/>
    <property type="evidence" value="ECO:0007669"/>
    <property type="project" value="UniProtKB-UniRule"/>
</dbReference>
<dbReference type="GO" id="GO:0009236">
    <property type="term" value="P:cobalamin biosynthetic process"/>
    <property type="evidence" value="ECO:0007669"/>
    <property type="project" value="UniProtKB-UniRule"/>
</dbReference>
<dbReference type="HAMAP" id="MF_00719">
    <property type="entry name" value="CobS"/>
    <property type="match status" value="1"/>
</dbReference>
<dbReference type="InterPro" id="IPR003805">
    <property type="entry name" value="CobS"/>
</dbReference>
<dbReference type="NCBIfam" id="TIGR00317">
    <property type="entry name" value="cobS"/>
    <property type="match status" value="1"/>
</dbReference>
<dbReference type="PANTHER" id="PTHR34148">
    <property type="entry name" value="ADENOSYLCOBINAMIDE-GDP RIBAZOLETRANSFERASE"/>
    <property type="match status" value="1"/>
</dbReference>
<dbReference type="PANTHER" id="PTHR34148:SF1">
    <property type="entry name" value="ADENOSYLCOBINAMIDE-GDP RIBAZOLETRANSFERASE"/>
    <property type="match status" value="1"/>
</dbReference>
<dbReference type="Pfam" id="PF02654">
    <property type="entry name" value="CobS"/>
    <property type="match status" value="1"/>
</dbReference>
<gene>
    <name evidence="1" type="primary">cobS</name>
    <name type="ordered locus">tll1337</name>
</gene>
<organism>
    <name type="scientific">Thermosynechococcus vestitus (strain NIES-2133 / IAM M-273 / BP-1)</name>
    <dbReference type="NCBI Taxonomy" id="197221"/>
    <lineage>
        <taxon>Bacteria</taxon>
        <taxon>Bacillati</taxon>
        <taxon>Cyanobacteriota</taxon>
        <taxon>Cyanophyceae</taxon>
        <taxon>Acaryochloridales</taxon>
        <taxon>Thermosynechococcaceae</taxon>
        <taxon>Thermosynechococcus</taxon>
    </lineage>
</organism>
<keyword id="KW-0997">Cell inner membrane</keyword>
<keyword id="KW-1003">Cell membrane</keyword>
<keyword id="KW-0169">Cobalamin biosynthesis</keyword>
<keyword id="KW-0460">Magnesium</keyword>
<keyword id="KW-0472">Membrane</keyword>
<keyword id="KW-1185">Reference proteome</keyword>
<keyword id="KW-0808">Transferase</keyword>
<keyword id="KW-0812">Transmembrane</keyword>
<keyword id="KW-1133">Transmembrane helix</keyword>